<proteinExistence type="inferred from homology"/>
<organism>
    <name type="scientific">Synechococcus sp. (strain CC9605)</name>
    <dbReference type="NCBI Taxonomy" id="110662"/>
    <lineage>
        <taxon>Bacteria</taxon>
        <taxon>Bacillati</taxon>
        <taxon>Cyanobacteriota</taxon>
        <taxon>Cyanophyceae</taxon>
        <taxon>Synechococcales</taxon>
        <taxon>Synechococcaceae</taxon>
        <taxon>Synechococcus</taxon>
    </lineage>
</organism>
<name>CLPP1_SYNSC</name>
<comment type="function">
    <text evidence="1">Cleaves peptides in various proteins in a process that requires ATP hydrolysis. Has a chymotrypsin-like activity. Plays a major role in the degradation of misfolded proteins.</text>
</comment>
<comment type="catalytic activity">
    <reaction evidence="1">
        <text>Hydrolysis of proteins to small peptides in the presence of ATP and magnesium. alpha-casein is the usual test substrate. In the absence of ATP, only oligopeptides shorter than five residues are hydrolyzed (such as succinyl-Leu-Tyr-|-NHMec, and Leu-Tyr-Leu-|-Tyr-Trp, in which cleavage of the -Tyr-|-Leu- and -Tyr-|-Trp bonds also occurs).</text>
        <dbReference type="EC" id="3.4.21.92"/>
    </reaction>
</comment>
<comment type="subunit">
    <text evidence="1">Fourteen ClpP subunits assemble into 2 heptameric rings which stack back to back to give a disk-like structure with a central cavity, resembling the structure of eukaryotic proteasomes.</text>
</comment>
<comment type="subcellular location">
    <subcellularLocation>
        <location evidence="1">Cytoplasm</location>
    </subcellularLocation>
</comment>
<comment type="similarity">
    <text evidence="1">Belongs to the peptidase S14 family.</text>
</comment>
<comment type="sequence caution" evidence="2">
    <conflict type="erroneous initiation">
        <sequence resource="EMBL-CDS" id="ABB33844"/>
    </conflict>
</comment>
<protein>
    <recommendedName>
        <fullName evidence="1">ATP-dependent Clp protease proteolytic subunit 1</fullName>
        <ecNumber evidence="1">3.4.21.92</ecNumber>
    </recommendedName>
    <alternativeName>
        <fullName evidence="1">Endopeptidase Clp 1</fullName>
    </alternativeName>
</protein>
<dbReference type="EC" id="3.4.21.92" evidence="1"/>
<dbReference type="EMBL" id="CP000110">
    <property type="protein sequence ID" value="ABB33844.1"/>
    <property type="status" value="ALT_INIT"/>
    <property type="molecule type" value="Genomic_DNA"/>
</dbReference>
<dbReference type="SMR" id="Q3ANI8"/>
<dbReference type="STRING" id="110662.Syncc9605_0065"/>
<dbReference type="MEROPS" id="S14.001"/>
<dbReference type="KEGG" id="syd:Syncc9605_0065"/>
<dbReference type="eggNOG" id="COG0740">
    <property type="taxonomic scope" value="Bacteria"/>
</dbReference>
<dbReference type="HOGENOM" id="CLU_058707_3_2_3"/>
<dbReference type="OrthoDB" id="571524at2"/>
<dbReference type="GO" id="GO:0005737">
    <property type="term" value="C:cytoplasm"/>
    <property type="evidence" value="ECO:0007669"/>
    <property type="project" value="UniProtKB-SubCell"/>
</dbReference>
<dbReference type="GO" id="GO:0009368">
    <property type="term" value="C:endopeptidase Clp complex"/>
    <property type="evidence" value="ECO:0007669"/>
    <property type="project" value="TreeGrafter"/>
</dbReference>
<dbReference type="GO" id="GO:0004176">
    <property type="term" value="F:ATP-dependent peptidase activity"/>
    <property type="evidence" value="ECO:0007669"/>
    <property type="project" value="InterPro"/>
</dbReference>
<dbReference type="GO" id="GO:0051117">
    <property type="term" value="F:ATPase binding"/>
    <property type="evidence" value="ECO:0007669"/>
    <property type="project" value="TreeGrafter"/>
</dbReference>
<dbReference type="GO" id="GO:0004252">
    <property type="term" value="F:serine-type endopeptidase activity"/>
    <property type="evidence" value="ECO:0007669"/>
    <property type="project" value="UniProtKB-UniRule"/>
</dbReference>
<dbReference type="GO" id="GO:0006515">
    <property type="term" value="P:protein quality control for misfolded or incompletely synthesized proteins"/>
    <property type="evidence" value="ECO:0007669"/>
    <property type="project" value="TreeGrafter"/>
</dbReference>
<dbReference type="CDD" id="cd07017">
    <property type="entry name" value="S14_ClpP_2"/>
    <property type="match status" value="1"/>
</dbReference>
<dbReference type="FunFam" id="3.90.226.10:FF:000001">
    <property type="entry name" value="ATP-dependent Clp protease proteolytic subunit"/>
    <property type="match status" value="1"/>
</dbReference>
<dbReference type="Gene3D" id="3.90.226.10">
    <property type="entry name" value="2-enoyl-CoA Hydratase, Chain A, domain 1"/>
    <property type="match status" value="1"/>
</dbReference>
<dbReference type="HAMAP" id="MF_00444">
    <property type="entry name" value="ClpP"/>
    <property type="match status" value="1"/>
</dbReference>
<dbReference type="InterPro" id="IPR001907">
    <property type="entry name" value="ClpP"/>
</dbReference>
<dbReference type="InterPro" id="IPR029045">
    <property type="entry name" value="ClpP/crotonase-like_dom_sf"/>
</dbReference>
<dbReference type="InterPro" id="IPR023562">
    <property type="entry name" value="ClpP/TepA"/>
</dbReference>
<dbReference type="InterPro" id="IPR033135">
    <property type="entry name" value="ClpP_His_AS"/>
</dbReference>
<dbReference type="NCBIfam" id="TIGR00493">
    <property type="entry name" value="clpP"/>
    <property type="match status" value="1"/>
</dbReference>
<dbReference type="NCBIfam" id="NF001368">
    <property type="entry name" value="PRK00277.1"/>
    <property type="match status" value="1"/>
</dbReference>
<dbReference type="NCBIfam" id="NF009205">
    <property type="entry name" value="PRK12553.1"/>
    <property type="match status" value="1"/>
</dbReference>
<dbReference type="PANTHER" id="PTHR10381">
    <property type="entry name" value="ATP-DEPENDENT CLP PROTEASE PROTEOLYTIC SUBUNIT"/>
    <property type="match status" value="1"/>
</dbReference>
<dbReference type="PANTHER" id="PTHR10381:SF70">
    <property type="entry name" value="ATP-DEPENDENT CLP PROTEASE PROTEOLYTIC SUBUNIT"/>
    <property type="match status" value="1"/>
</dbReference>
<dbReference type="Pfam" id="PF00574">
    <property type="entry name" value="CLP_protease"/>
    <property type="match status" value="1"/>
</dbReference>
<dbReference type="PRINTS" id="PR00127">
    <property type="entry name" value="CLPPROTEASEP"/>
</dbReference>
<dbReference type="SUPFAM" id="SSF52096">
    <property type="entry name" value="ClpP/crotonase"/>
    <property type="match status" value="1"/>
</dbReference>
<dbReference type="PROSITE" id="PS00382">
    <property type="entry name" value="CLP_PROTEASE_HIS"/>
    <property type="match status" value="1"/>
</dbReference>
<sequence>MPVSAPGPLPTVVEQSGRGDRAFDIYSRLLRERIIFLGTGVDDAVADALVAQMLFLEAEDPEKDIQIYINSPGGSVTAGLAIYDTMQQVAPDVVTICYGLAASMGAFLLSGGTKGKRLALPNARIMIHQPLGGAQGQAVDIEIQAKEILYLKETLNGLMAEHTGQPLDKISEDTDRDYFLSPAEAVEYGLIDRVVDSSGDGGIITES</sequence>
<evidence type="ECO:0000255" key="1">
    <source>
        <dbReference type="HAMAP-Rule" id="MF_00444"/>
    </source>
</evidence>
<evidence type="ECO:0000305" key="2"/>
<keyword id="KW-0963">Cytoplasm</keyword>
<keyword id="KW-0378">Hydrolase</keyword>
<keyword id="KW-0645">Protease</keyword>
<keyword id="KW-0720">Serine protease</keyword>
<accession>Q3ANI8</accession>
<gene>
    <name evidence="1" type="primary">clpP1</name>
    <name type="ordered locus">Syncc9605_0065</name>
</gene>
<feature type="chain" id="PRO_0000236406" description="ATP-dependent Clp protease proteolytic subunit 1">
    <location>
        <begin position="1"/>
        <end position="207"/>
    </location>
</feature>
<feature type="active site" description="Nucleophile" evidence="1">
    <location>
        <position position="103"/>
    </location>
</feature>
<feature type="active site" evidence="1">
    <location>
        <position position="128"/>
    </location>
</feature>
<reference key="1">
    <citation type="submission" date="2005-07" db="EMBL/GenBank/DDBJ databases">
        <title>Complete sequence of Synechococcus sp. CC9605.</title>
        <authorList>
            <consortium name="US DOE Joint Genome Institute"/>
            <person name="Copeland A."/>
            <person name="Lucas S."/>
            <person name="Lapidus A."/>
            <person name="Barry K."/>
            <person name="Detter J.C."/>
            <person name="Glavina T."/>
            <person name="Hammon N."/>
            <person name="Israni S."/>
            <person name="Pitluck S."/>
            <person name="Schmutz J."/>
            <person name="Martinez M."/>
            <person name="Larimer F."/>
            <person name="Land M."/>
            <person name="Kyrpides N."/>
            <person name="Ivanova N."/>
            <person name="Richardson P."/>
        </authorList>
    </citation>
    <scope>NUCLEOTIDE SEQUENCE [LARGE SCALE GENOMIC DNA]</scope>
    <source>
        <strain>CC9605</strain>
    </source>
</reference>